<reference key="1">
    <citation type="journal article" date="1996" name="Mol. Microbiol.">
        <title>Identification of a ClpC ATPase required for stress tolerance and in vivo survival of Listeria monocytogenes.</title>
        <authorList>
            <person name="Rouquette C."/>
            <person name="Ripio M.T."/>
            <person name="Pellegrini E."/>
            <person name="Bolla J.-M."/>
            <person name="Tascon R.I."/>
            <person name="Vazquez-Boland J.A."/>
            <person name="Berche P."/>
        </authorList>
    </citation>
    <scope>NUCLEOTIDE SEQUENCE [GENOMIC DNA]</scope>
    <source>
        <strain>LO28 / Serovar 1/2c</strain>
    </source>
</reference>
<reference key="2">
    <citation type="journal article" date="2001" name="Science">
        <title>Comparative genomics of Listeria species.</title>
        <authorList>
            <person name="Glaser P."/>
            <person name="Frangeul L."/>
            <person name="Buchrieser C."/>
            <person name="Rusniok C."/>
            <person name="Amend A."/>
            <person name="Baquero F."/>
            <person name="Berche P."/>
            <person name="Bloecker H."/>
            <person name="Brandt P."/>
            <person name="Chakraborty T."/>
            <person name="Charbit A."/>
            <person name="Chetouani F."/>
            <person name="Couve E."/>
            <person name="de Daruvar A."/>
            <person name="Dehoux P."/>
            <person name="Domann E."/>
            <person name="Dominguez-Bernal G."/>
            <person name="Duchaud E."/>
            <person name="Durant L."/>
            <person name="Dussurget O."/>
            <person name="Entian K.-D."/>
            <person name="Fsihi H."/>
            <person name="Garcia-del Portillo F."/>
            <person name="Garrido P."/>
            <person name="Gautier L."/>
            <person name="Goebel W."/>
            <person name="Gomez-Lopez N."/>
            <person name="Hain T."/>
            <person name="Hauf J."/>
            <person name="Jackson D."/>
            <person name="Jones L.-M."/>
            <person name="Kaerst U."/>
            <person name="Kreft J."/>
            <person name="Kuhn M."/>
            <person name="Kunst F."/>
            <person name="Kurapkat G."/>
            <person name="Madueno E."/>
            <person name="Maitournam A."/>
            <person name="Mata Vicente J."/>
            <person name="Ng E."/>
            <person name="Nedjari H."/>
            <person name="Nordsiek G."/>
            <person name="Novella S."/>
            <person name="de Pablos B."/>
            <person name="Perez-Diaz J.-C."/>
            <person name="Purcell R."/>
            <person name="Remmel B."/>
            <person name="Rose M."/>
            <person name="Schlueter T."/>
            <person name="Simoes N."/>
            <person name="Tierrez A."/>
            <person name="Vazquez-Boland J.-A."/>
            <person name="Voss H."/>
            <person name="Wehland J."/>
            <person name="Cossart P."/>
        </authorList>
    </citation>
    <scope>NUCLEOTIDE SEQUENCE [LARGE SCALE GENOMIC DNA]</scope>
    <source>
        <strain>ATCC BAA-679 / EGD-e</strain>
    </source>
</reference>
<organism>
    <name type="scientific">Listeria monocytogenes serovar 1/2a (strain ATCC BAA-679 / EGD-e)</name>
    <dbReference type="NCBI Taxonomy" id="169963"/>
    <lineage>
        <taxon>Bacteria</taxon>
        <taxon>Bacillati</taxon>
        <taxon>Bacillota</taxon>
        <taxon>Bacilli</taxon>
        <taxon>Bacillales</taxon>
        <taxon>Listeriaceae</taxon>
        <taxon>Listeria</taxon>
    </lineage>
</organism>
<proteinExistence type="inferred from homology"/>
<name>MCSB_LISMO</name>
<sequence>MNVFEPRLSSWLENAGDDDDVVLSSRIRLARNLKDEQFPIYEQKEEIVDNIAEVFDDNFILIKMNQISLLQKALLVEKHLISPYMMNKSEYGAVLLNEEENVSIMLNEEDHLRIQCMTPGLRLFDALEAALQIDGYVEEKLSYAFDKEFGYLTSCVTNIGTGMRASVMVHLPGLVTTKRIKSVIEAIRSLGFVVRGIYGEGSMPASNIFQVSNQVTLGKTEAEIVEDLTQVMEQIIMQERVARTTLKQKFHIALEDRVFRSYGLLMNCRIISMKEAADAISDIRFGVELGFFEHISRQKMNELVLFSQPAFLRREAGRDMDELEEKVIRAKVIREILGDK</sequence>
<keyword id="KW-0067">ATP-binding</keyword>
<keyword id="KW-0418">Kinase</keyword>
<keyword id="KW-0547">Nucleotide-binding</keyword>
<keyword id="KW-1185">Reference proteome</keyword>
<keyword id="KW-0808">Transferase</keyword>
<evidence type="ECO:0000255" key="1">
    <source>
        <dbReference type="HAMAP-Rule" id="MF_00602"/>
    </source>
</evidence>
<protein>
    <recommendedName>
        <fullName evidence="1">Protein-arginine kinase</fullName>
        <ecNumber evidence="1">2.7.14.1</ecNumber>
    </recommendedName>
</protein>
<gene>
    <name evidence="1" type="primary">mcsB</name>
    <name type="ordered locus">lmo0231</name>
</gene>
<feature type="chain" id="PRO_0000212026" description="Protein-arginine kinase">
    <location>
        <begin position="1"/>
        <end position="340"/>
    </location>
</feature>
<feature type="domain" description="Phosphagen kinase C-terminal" evidence="1">
    <location>
        <begin position="21"/>
        <end position="242"/>
    </location>
</feature>
<feature type="binding site" evidence="1">
    <location>
        <begin position="24"/>
        <end position="28"/>
    </location>
    <ligand>
        <name>ATP</name>
        <dbReference type="ChEBI" id="CHEBI:30616"/>
    </ligand>
</feature>
<feature type="binding site" evidence="1">
    <location>
        <position position="79"/>
    </location>
    <ligand>
        <name>ATP</name>
        <dbReference type="ChEBI" id="CHEBI:30616"/>
    </ligand>
</feature>
<feature type="binding site" evidence="1">
    <location>
        <position position="113"/>
    </location>
    <ligand>
        <name>ATP</name>
        <dbReference type="ChEBI" id="CHEBI:30616"/>
    </ligand>
</feature>
<feature type="binding site" evidence="1">
    <location>
        <begin position="164"/>
        <end position="168"/>
    </location>
    <ligand>
        <name>ATP</name>
        <dbReference type="ChEBI" id="CHEBI:30616"/>
    </ligand>
</feature>
<feature type="binding site" evidence="1">
    <location>
        <begin position="195"/>
        <end position="200"/>
    </location>
    <ligand>
        <name>ATP</name>
        <dbReference type="ChEBI" id="CHEBI:30616"/>
    </ligand>
</feature>
<comment type="function">
    <text evidence="1">Catalyzes the specific phosphorylation of arginine residues in proteins.</text>
</comment>
<comment type="catalytic activity">
    <reaction evidence="1">
        <text>L-arginyl-[protein] + ATP = N(omega)-phospho-L-arginyl-[protein] + ADP + H(+)</text>
        <dbReference type="Rhea" id="RHEA:43384"/>
        <dbReference type="Rhea" id="RHEA-COMP:10532"/>
        <dbReference type="Rhea" id="RHEA-COMP:10533"/>
        <dbReference type="ChEBI" id="CHEBI:15378"/>
        <dbReference type="ChEBI" id="CHEBI:29965"/>
        <dbReference type="ChEBI" id="CHEBI:30616"/>
        <dbReference type="ChEBI" id="CHEBI:83226"/>
        <dbReference type="ChEBI" id="CHEBI:456216"/>
        <dbReference type="EC" id="2.7.14.1"/>
    </reaction>
</comment>
<comment type="similarity">
    <text evidence="1">Belongs to the ATP:guanido phosphotransferase family.</text>
</comment>
<dbReference type="EC" id="2.7.14.1" evidence="1"/>
<dbReference type="EMBL" id="U40604">
    <property type="protein sequence ID" value="AAC44445.1"/>
    <property type="molecule type" value="Genomic_DNA"/>
</dbReference>
<dbReference type="EMBL" id="AL591974">
    <property type="protein sequence ID" value="CAD00758.1"/>
    <property type="molecule type" value="Genomic_DNA"/>
</dbReference>
<dbReference type="PIR" id="AH1103">
    <property type="entry name" value="AH1103"/>
</dbReference>
<dbReference type="RefSeq" id="NP_463762.1">
    <property type="nucleotide sequence ID" value="NC_003210.1"/>
</dbReference>
<dbReference type="RefSeq" id="WP_010989379.1">
    <property type="nucleotide sequence ID" value="NZ_CP149495.1"/>
</dbReference>
<dbReference type="SMR" id="Q48759"/>
<dbReference type="STRING" id="169963.gene:17592882"/>
<dbReference type="PaxDb" id="169963-lmo0231"/>
<dbReference type="EnsemblBacteria" id="CAD00758">
    <property type="protein sequence ID" value="CAD00758"/>
    <property type="gene ID" value="CAD00758"/>
</dbReference>
<dbReference type="GeneID" id="987202"/>
<dbReference type="KEGG" id="lmo:lmo0231"/>
<dbReference type="PATRIC" id="fig|169963.11.peg.239"/>
<dbReference type="eggNOG" id="COG3869">
    <property type="taxonomic scope" value="Bacteria"/>
</dbReference>
<dbReference type="HOGENOM" id="CLU_066591_1_0_9"/>
<dbReference type="OrthoDB" id="9791353at2"/>
<dbReference type="PhylomeDB" id="Q48759"/>
<dbReference type="BioCyc" id="LMON169963:LMO0231-MONOMER"/>
<dbReference type="Proteomes" id="UP000000817">
    <property type="component" value="Chromosome"/>
</dbReference>
<dbReference type="GO" id="GO:0005615">
    <property type="term" value="C:extracellular space"/>
    <property type="evidence" value="ECO:0000318"/>
    <property type="project" value="GO_Central"/>
</dbReference>
<dbReference type="GO" id="GO:0005524">
    <property type="term" value="F:ATP binding"/>
    <property type="evidence" value="ECO:0007669"/>
    <property type="project" value="UniProtKB-KW"/>
</dbReference>
<dbReference type="GO" id="GO:0004111">
    <property type="term" value="F:creatine kinase activity"/>
    <property type="evidence" value="ECO:0007669"/>
    <property type="project" value="InterPro"/>
</dbReference>
<dbReference type="GO" id="GO:0016301">
    <property type="term" value="F:kinase activity"/>
    <property type="evidence" value="ECO:0000318"/>
    <property type="project" value="GO_Central"/>
</dbReference>
<dbReference type="GO" id="GO:0004672">
    <property type="term" value="F:protein kinase activity"/>
    <property type="evidence" value="ECO:0007669"/>
    <property type="project" value="UniProtKB-UniRule"/>
</dbReference>
<dbReference type="GO" id="GO:0046314">
    <property type="term" value="P:phosphocreatine biosynthetic process"/>
    <property type="evidence" value="ECO:0007669"/>
    <property type="project" value="InterPro"/>
</dbReference>
<dbReference type="CDD" id="cd07930">
    <property type="entry name" value="bacterial_phosphagen_kinase"/>
    <property type="match status" value="1"/>
</dbReference>
<dbReference type="FunFam" id="3.30.590.10:FF:000007">
    <property type="entry name" value="Protein-arginine kinase"/>
    <property type="match status" value="1"/>
</dbReference>
<dbReference type="Gene3D" id="3.30.590.10">
    <property type="entry name" value="Glutamine synthetase/guanido kinase, catalytic domain"/>
    <property type="match status" value="1"/>
</dbReference>
<dbReference type="HAMAP" id="MF_00602">
    <property type="entry name" value="Prot_Arg_kinase"/>
    <property type="match status" value="1"/>
</dbReference>
<dbReference type="InterPro" id="IPR023660">
    <property type="entry name" value="Arg_Kinase"/>
</dbReference>
<dbReference type="InterPro" id="IPR000749">
    <property type="entry name" value="ATP-guanido_PTrfase"/>
</dbReference>
<dbReference type="InterPro" id="IPR022414">
    <property type="entry name" value="ATP-guanido_PTrfase_cat"/>
</dbReference>
<dbReference type="InterPro" id="IPR014746">
    <property type="entry name" value="Gln_synth/guanido_kin_cat_dom"/>
</dbReference>
<dbReference type="NCBIfam" id="NF002192">
    <property type="entry name" value="PRK01059.1-2"/>
    <property type="match status" value="1"/>
</dbReference>
<dbReference type="NCBIfam" id="NF002194">
    <property type="entry name" value="PRK01059.1-4"/>
    <property type="match status" value="1"/>
</dbReference>
<dbReference type="PANTHER" id="PTHR11547:SF38">
    <property type="entry name" value="ARGININE KINASE 1-RELATED"/>
    <property type="match status" value="1"/>
</dbReference>
<dbReference type="PANTHER" id="PTHR11547">
    <property type="entry name" value="ARGININE OR CREATINE KINASE"/>
    <property type="match status" value="1"/>
</dbReference>
<dbReference type="Pfam" id="PF00217">
    <property type="entry name" value="ATP-gua_Ptrans"/>
    <property type="match status" value="1"/>
</dbReference>
<dbReference type="SUPFAM" id="SSF55931">
    <property type="entry name" value="Glutamine synthetase/guanido kinase"/>
    <property type="match status" value="1"/>
</dbReference>
<dbReference type="PROSITE" id="PS51510">
    <property type="entry name" value="PHOSPHAGEN_KINASE_C"/>
    <property type="match status" value="1"/>
</dbReference>
<accession>Q48759</accession>